<protein>
    <recommendedName>
        <fullName>Probable F-box protein At2g36090</fullName>
    </recommendedName>
</protein>
<dbReference type="EMBL" id="AC007135">
    <property type="protein sequence ID" value="AAD26966.1"/>
    <property type="molecule type" value="Genomic_DNA"/>
</dbReference>
<dbReference type="EMBL" id="CP002685">
    <property type="protein sequence ID" value="AEC09205.1"/>
    <property type="molecule type" value="Genomic_DNA"/>
</dbReference>
<dbReference type="EMBL" id="AK228039">
    <property type="protein sequence ID" value="BAF00001.1"/>
    <property type="molecule type" value="mRNA"/>
</dbReference>
<dbReference type="PIR" id="G84776">
    <property type="entry name" value="G84776"/>
</dbReference>
<dbReference type="RefSeq" id="NP_181153.1">
    <property type="nucleotide sequence ID" value="NM_129168.2"/>
</dbReference>
<dbReference type="FunCoup" id="Q9SIH5">
    <property type="interactions" value="12"/>
</dbReference>
<dbReference type="STRING" id="3702.Q9SIH5"/>
<dbReference type="PaxDb" id="3702-AT2G36090.1"/>
<dbReference type="EnsemblPlants" id="AT2G36090.1">
    <property type="protein sequence ID" value="AT2G36090.1"/>
    <property type="gene ID" value="AT2G36090"/>
</dbReference>
<dbReference type="GeneID" id="818182"/>
<dbReference type="Gramene" id="AT2G36090.1">
    <property type="protein sequence ID" value="AT2G36090.1"/>
    <property type="gene ID" value="AT2G36090"/>
</dbReference>
<dbReference type="KEGG" id="ath:AT2G36090"/>
<dbReference type="Araport" id="AT2G36090"/>
<dbReference type="TAIR" id="AT2G36090"/>
<dbReference type="eggNOG" id="ENOG502QV6F">
    <property type="taxonomic scope" value="Eukaryota"/>
</dbReference>
<dbReference type="HOGENOM" id="CLU_057235_0_0_1"/>
<dbReference type="InParanoid" id="Q9SIH5"/>
<dbReference type="OMA" id="LWTNICH"/>
<dbReference type="OrthoDB" id="671172at2759"/>
<dbReference type="PhylomeDB" id="Q9SIH5"/>
<dbReference type="PRO" id="PR:Q9SIH5"/>
<dbReference type="Proteomes" id="UP000006548">
    <property type="component" value="Chromosome 2"/>
</dbReference>
<dbReference type="ExpressionAtlas" id="Q9SIH5">
    <property type="expression patterns" value="baseline and differential"/>
</dbReference>
<dbReference type="Gene3D" id="1.20.1280.50">
    <property type="match status" value="1"/>
</dbReference>
<dbReference type="InterPro" id="IPR045283">
    <property type="entry name" value="AT3G44326-like"/>
</dbReference>
<dbReference type="InterPro" id="IPR036047">
    <property type="entry name" value="F-box-like_dom_sf"/>
</dbReference>
<dbReference type="InterPro" id="IPR001810">
    <property type="entry name" value="F-box_dom"/>
</dbReference>
<dbReference type="PANTHER" id="PTHR33736">
    <property type="entry name" value="F-BOX PROTEIN-RELATED"/>
    <property type="match status" value="1"/>
</dbReference>
<dbReference type="PANTHER" id="PTHR33736:SF13">
    <property type="entry name" value="OS11G0155100 PROTEIN"/>
    <property type="match status" value="1"/>
</dbReference>
<dbReference type="Pfam" id="PF12937">
    <property type="entry name" value="F-box-like"/>
    <property type="match status" value="1"/>
</dbReference>
<dbReference type="SUPFAM" id="SSF81383">
    <property type="entry name" value="F-box domain"/>
    <property type="match status" value="1"/>
</dbReference>
<proteinExistence type="evidence at transcript level"/>
<organism>
    <name type="scientific">Arabidopsis thaliana</name>
    <name type="common">Mouse-ear cress</name>
    <dbReference type="NCBI Taxonomy" id="3702"/>
    <lineage>
        <taxon>Eukaryota</taxon>
        <taxon>Viridiplantae</taxon>
        <taxon>Streptophyta</taxon>
        <taxon>Embryophyta</taxon>
        <taxon>Tracheophyta</taxon>
        <taxon>Spermatophyta</taxon>
        <taxon>Magnoliopsida</taxon>
        <taxon>eudicotyledons</taxon>
        <taxon>Gunneridae</taxon>
        <taxon>Pentapetalae</taxon>
        <taxon>rosids</taxon>
        <taxon>malvids</taxon>
        <taxon>Brassicales</taxon>
        <taxon>Brassicaceae</taxon>
        <taxon>Camelineae</taxon>
        <taxon>Arabidopsis</taxon>
    </lineage>
</organism>
<gene>
    <name type="ordered locus">At2g36090</name>
    <name type="ORF">F9C22.2</name>
</gene>
<feature type="chain" id="PRO_0000396037" description="Probable F-box protein At2g36090">
    <location>
        <begin position="1"/>
        <end position="317"/>
    </location>
</feature>
<feature type="domain" description="F-box">
    <location>
        <begin position="25"/>
        <end position="74"/>
    </location>
</feature>
<keyword id="KW-1185">Reference proteome</keyword>
<accession>Q9SIH5</accession>
<reference key="1">
    <citation type="journal article" date="1999" name="Nature">
        <title>Sequence and analysis of chromosome 2 of the plant Arabidopsis thaliana.</title>
        <authorList>
            <person name="Lin X."/>
            <person name="Kaul S."/>
            <person name="Rounsley S.D."/>
            <person name="Shea T.P."/>
            <person name="Benito M.-I."/>
            <person name="Town C.D."/>
            <person name="Fujii C.Y."/>
            <person name="Mason T.M."/>
            <person name="Bowman C.L."/>
            <person name="Barnstead M.E."/>
            <person name="Feldblyum T.V."/>
            <person name="Buell C.R."/>
            <person name="Ketchum K.A."/>
            <person name="Lee J.J."/>
            <person name="Ronning C.M."/>
            <person name="Koo H.L."/>
            <person name="Moffat K.S."/>
            <person name="Cronin L.A."/>
            <person name="Shen M."/>
            <person name="Pai G."/>
            <person name="Van Aken S."/>
            <person name="Umayam L."/>
            <person name="Tallon L.J."/>
            <person name="Gill J.E."/>
            <person name="Adams M.D."/>
            <person name="Carrera A.J."/>
            <person name="Creasy T.H."/>
            <person name="Goodman H.M."/>
            <person name="Somerville C.R."/>
            <person name="Copenhaver G.P."/>
            <person name="Preuss D."/>
            <person name="Nierman W.C."/>
            <person name="White O."/>
            <person name="Eisen J.A."/>
            <person name="Salzberg S.L."/>
            <person name="Fraser C.M."/>
            <person name="Venter J.C."/>
        </authorList>
    </citation>
    <scope>NUCLEOTIDE SEQUENCE [LARGE SCALE GENOMIC DNA]</scope>
    <source>
        <strain>cv. Columbia</strain>
    </source>
</reference>
<reference key="2">
    <citation type="journal article" date="2017" name="Plant J.">
        <title>Araport11: a complete reannotation of the Arabidopsis thaliana reference genome.</title>
        <authorList>
            <person name="Cheng C.Y."/>
            <person name="Krishnakumar V."/>
            <person name="Chan A.P."/>
            <person name="Thibaud-Nissen F."/>
            <person name="Schobel S."/>
            <person name="Town C.D."/>
        </authorList>
    </citation>
    <scope>GENOME REANNOTATION</scope>
    <source>
        <strain>cv. Columbia</strain>
    </source>
</reference>
<reference key="3">
    <citation type="submission" date="2006-07" db="EMBL/GenBank/DDBJ databases">
        <title>Large-scale analysis of RIKEN Arabidopsis full-length (RAFL) cDNAs.</title>
        <authorList>
            <person name="Totoki Y."/>
            <person name="Seki M."/>
            <person name="Ishida J."/>
            <person name="Nakajima M."/>
            <person name="Enju A."/>
            <person name="Kamiya A."/>
            <person name="Narusaka M."/>
            <person name="Shin-i T."/>
            <person name="Nakagawa M."/>
            <person name="Sakamoto N."/>
            <person name="Oishi K."/>
            <person name="Kohara Y."/>
            <person name="Kobayashi M."/>
            <person name="Toyoda A."/>
            <person name="Sakaki Y."/>
            <person name="Sakurai T."/>
            <person name="Iida K."/>
            <person name="Akiyama K."/>
            <person name="Satou M."/>
            <person name="Toyoda T."/>
            <person name="Konagaya A."/>
            <person name="Carninci P."/>
            <person name="Kawai J."/>
            <person name="Hayashizaki Y."/>
            <person name="Shinozaki K."/>
        </authorList>
    </citation>
    <scope>NUCLEOTIDE SEQUENCE [LARGE SCALE MRNA]</scope>
    <source>
        <strain>cv. Columbia</strain>
    </source>
</reference>
<sequence length="317" mass="35563">MANSSSFSPSTTVTDLISTVHDDIIESHILTRLDGATLASVSCASSHLHHLASNEILWSKICRSTWPSCSGGSRSFFSDAYSMVETAGTVSDLDRPFPELISAVDLHYRGKLIFSRVVKTETTTAWFKSSPLRIDLVDTKDTVATPIKRRQRTEDTCRDLEKDLTLSWIVIDPIGKRAANISSHRPVSVQRNWISGEVEAQFATVVGAVECVITVVTCGEEEMHVREVSLKVEKMEGTHLNGRDSLVILRSVMEGKRVNGSRREVESKKRHEEFMEKKREMKEKKMRVESVFDILTVAFGILGFVLLVVFCLWRTSI</sequence>
<name>FB322_ARATH</name>